<evidence type="ECO:0000255" key="1">
    <source>
        <dbReference type="HAMAP-Rule" id="MF_01554"/>
    </source>
</evidence>
<keyword id="KW-0413">Isomerase</keyword>
<keyword id="KW-0460">Magnesium</keyword>
<keyword id="KW-0479">Metal-binding</keyword>
<keyword id="KW-0597">Phosphoprotein</keyword>
<keyword id="KW-1185">Reference proteome</keyword>
<comment type="function">
    <text evidence="1">Catalyzes the conversion of glucosamine-6-phosphate to glucosamine-1-phosphate.</text>
</comment>
<comment type="catalytic activity">
    <reaction evidence="1">
        <text>alpha-D-glucosamine 1-phosphate = D-glucosamine 6-phosphate</text>
        <dbReference type="Rhea" id="RHEA:23424"/>
        <dbReference type="ChEBI" id="CHEBI:58516"/>
        <dbReference type="ChEBI" id="CHEBI:58725"/>
        <dbReference type="EC" id="5.4.2.10"/>
    </reaction>
</comment>
<comment type="cofactor">
    <cofactor evidence="1">
        <name>Mg(2+)</name>
        <dbReference type="ChEBI" id="CHEBI:18420"/>
    </cofactor>
    <text evidence="1">Binds 1 Mg(2+) ion per subunit.</text>
</comment>
<comment type="PTM">
    <text evidence="1">Activated by phosphorylation.</text>
</comment>
<comment type="similarity">
    <text evidence="1">Belongs to the phosphohexose mutase family.</text>
</comment>
<reference key="1">
    <citation type="submission" date="2006-10" db="EMBL/GenBank/DDBJ databases">
        <title>Complete sequence of chromosome of Pelobacter propionicus DSM 2379.</title>
        <authorList>
            <consortium name="US DOE Joint Genome Institute"/>
            <person name="Copeland A."/>
            <person name="Lucas S."/>
            <person name="Lapidus A."/>
            <person name="Barry K."/>
            <person name="Detter J.C."/>
            <person name="Glavina del Rio T."/>
            <person name="Hammon N."/>
            <person name="Israni S."/>
            <person name="Dalin E."/>
            <person name="Tice H."/>
            <person name="Pitluck S."/>
            <person name="Saunders E."/>
            <person name="Brettin T."/>
            <person name="Bruce D."/>
            <person name="Han C."/>
            <person name="Tapia R."/>
            <person name="Schmutz J."/>
            <person name="Larimer F."/>
            <person name="Land M."/>
            <person name="Hauser L."/>
            <person name="Kyrpides N."/>
            <person name="Kim E."/>
            <person name="Lovley D."/>
            <person name="Richardson P."/>
        </authorList>
    </citation>
    <scope>NUCLEOTIDE SEQUENCE [LARGE SCALE GENOMIC DNA]</scope>
    <source>
        <strain>DSM 2379 / NBRC 103807 / OttBd1</strain>
    </source>
</reference>
<proteinExistence type="inferred from homology"/>
<organism>
    <name type="scientific">Pelobacter propionicus (strain DSM 2379 / NBRC 103807 / OttBd1)</name>
    <dbReference type="NCBI Taxonomy" id="338966"/>
    <lineage>
        <taxon>Bacteria</taxon>
        <taxon>Pseudomonadati</taxon>
        <taxon>Thermodesulfobacteriota</taxon>
        <taxon>Desulfuromonadia</taxon>
        <taxon>Desulfuromonadales</taxon>
        <taxon>Desulfuromonadaceae</taxon>
        <taxon>Pelobacter</taxon>
    </lineage>
</organism>
<gene>
    <name evidence="1" type="primary">glmM</name>
    <name type="ordered locus">Ppro_2256</name>
</gene>
<feature type="chain" id="PRO_0000301352" description="Phosphoglucosamine mutase">
    <location>
        <begin position="1"/>
        <end position="453"/>
    </location>
</feature>
<feature type="active site" description="Phosphoserine intermediate" evidence="1">
    <location>
        <position position="102"/>
    </location>
</feature>
<feature type="binding site" description="via phosphate group" evidence="1">
    <location>
        <position position="102"/>
    </location>
    <ligand>
        <name>Mg(2+)</name>
        <dbReference type="ChEBI" id="CHEBI:18420"/>
    </ligand>
</feature>
<feature type="binding site" evidence="1">
    <location>
        <position position="244"/>
    </location>
    <ligand>
        <name>Mg(2+)</name>
        <dbReference type="ChEBI" id="CHEBI:18420"/>
    </ligand>
</feature>
<feature type="binding site" evidence="1">
    <location>
        <position position="246"/>
    </location>
    <ligand>
        <name>Mg(2+)</name>
        <dbReference type="ChEBI" id="CHEBI:18420"/>
    </ligand>
</feature>
<feature type="binding site" evidence="1">
    <location>
        <position position="248"/>
    </location>
    <ligand>
        <name>Mg(2+)</name>
        <dbReference type="ChEBI" id="CHEBI:18420"/>
    </ligand>
</feature>
<feature type="modified residue" description="Phosphoserine" evidence="1">
    <location>
        <position position="102"/>
    </location>
</feature>
<protein>
    <recommendedName>
        <fullName evidence="1">Phosphoglucosamine mutase</fullName>
        <ecNumber evidence="1">5.4.2.10</ecNumber>
    </recommendedName>
</protein>
<dbReference type="EC" id="5.4.2.10" evidence="1"/>
<dbReference type="EMBL" id="CP000482">
    <property type="protein sequence ID" value="ABK99863.1"/>
    <property type="molecule type" value="Genomic_DNA"/>
</dbReference>
<dbReference type="RefSeq" id="WP_011736123.1">
    <property type="nucleotide sequence ID" value="NC_008609.1"/>
</dbReference>
<dbReference type="SMR" id="A1AR93"/>
<dbReference type="STRING" id="338966.Ppro_2256"/>
<dbReference type="KEGG" id="ppd:Ppro_2256"/>
<dbReference type="eggNOG" id="COG1109">
    <property type="taxonomic scope" value="Bacteria"/>
</dbReference>
<dbReference type="HOGENOM" id="CLU_016950_7_0_7"/>
<dbReference type="OrthoDB" id="9806956at2"/>
<dbReference type="Proteomes" id="UP000006732">
    <property type="component" value="Chromosome"/>
</dbReference>
<dbReference type="GO" id="GO:0005829">
    <property type="term" value="C:cytosol"/>
    <property type="evidence" value="ECO:0007669"/>
    <property type="project" value="TreeGrafter"/>
</dbReference>
<dbReference type="GO" id="GO:0000287">
    <property type="term" value="F:magnesium ion binding"/>
    <property type="evidence" value="ECO:0007669"/>
    <property type="project" value="UniProtKB-UniRule"/>
</dbReference>
<dbReference type="GO" id="GO:0008966">
    <property type="term" value="F:phosphoglucosamine mutase activity"/>
    <property type="evidence" value="ECO:0007669"/>
    <property type="project" value="UniProtKB-UniRule"/>
</dbReference>
<dbReference type="GO" id="GO:0004615">
    <property type="term" value="F:phosphomannomutase activity"/>
    <property type="evidence" value="ECO:0007669"/>
    <property type="project" value="TreeGrafter"/>
</dbReference>
<dbReference type="GO" id="GO:0005975">
    <property type="term" value="P:carbohydrate metabolic process"/>
    <property type="evidence" value="ECO:0007669"/>
    <property type="project" value="InterPro"/>
</dbReference>
<dbReference type="GO" id="GO:0009252">
    <property type="term" value="P:peptidoglycan biosynthetic process"/>
    <property type="evidence" value="ECO:0007669"/>
    <property type="project" value="TreeGrafter"/>
</dbReference>
<dbReference type="GO" id="GO:0006048">
    <property type="term" value="P:UDP-N-acetylglucosamine biosynthetic process"/>
    <property type="evidence" value="ECO:0007669"/>
    <property type="project" value="TreeGrafter"/>
</dbReference>
<dbReference type="CDD" id="cd05802">
    <property type="entry name" value="GlmM"/>
    <property type="match status" value="1"/>
</dbReference>
<dbReference type="FunFam" id="3.30.310.50:FF:000001">
    <property type="entry name" value="Phosphoglucosamine mutase"/>
    <property type="match status" value="1"/>
</dbReference>
<dbReference type="FunFam" id="3.40.120.10:FF:000001">
    <property type="entry name" value="Phosphoglucosamine mutase"/>
    <property type="match status" value="1"/>
</dbReference>
<dbReference type="FunFam" id="3.40.120.10:FF:000002">
    <property type="entry name" value="Phosphoglucosamine mutase"/>
    <property type="match status" value="1"/>
</dbReference>
<dbReference type="Gene3D" id="3.40.120.10">
    <property type="entry name" value="Alpha-D-Glucose-1,6-Bisphosphate, subunit A, domain 3"/>
    <property type="match status" value="3"/>
</dbReference>
<dbReference type="Gene3D" id="3.30.310.50">
    <property type="entry name" value="Alpha-D-phosphohexomutase, C-terminal domain"/>
    <property type="match status" value="1"/>
</dbReference>
<dbReference type="HAMAP" id="MF_01554_B">
    <property type="entry name" value="GlmM_B"/>
    <property type="match status" value="1"/>
</dbReference>
<dbReference type="InterPro" id="IPR005844">
    <property type="entry name" value="A-D-PHexomutase_a/b/a-I"/>
</dbReference>
<dbReference type="InterPro" id="IPR016055">
    <property type="entry name" value="A-D-PHexomutase_a/b/a-I/II/III"/>
</dbReference>
<dbReference type="InterPro" id="IPR005845">
    <property type="entry name" value="A-D-PHexomutase_a/b/a-II"/>
</dbReference>
<dbReference type="InterPro" id="IPR005846">
    <property type="entry name" value="A-D-PHexomutase_a/b/a-III"/>
</dbReference>
<dbReference type="InterPro" id="IPR005843">
    <property type="entry name" value="A-D-PHexomutase_C"/>
</dbReference>
<dbReference type="InterPro" id="IPR036900">
    <property type="entry name" value="A-D-PHexomutase_C_sf"/>
</dbReference>
<dbReference type="InterPro" id="IPR016066">
    <property type="entry name" value="A-D-PHexomutase_CS"/>
</dbReference>
<dbReference type="InterPro" id="IPR005841">
    <property type="entry name" value="Alpha-D-phosphohexomutase_SF"/>
</dbReference>
<dbReference type="InterPro" id="IPR006352">
    <property type="entry name" value="GlmM_bact"/>
</dbReference>
<dbReference type="InterPro" id="IPR050060">
    <property type="entry name" value="Phosphoglucosamine_mutase"/>
</dbReference>
<dbReference type="NCBIfam" id="TIGR01455">
    <property type="entry name" value="glmM"/>
    <property type="match status" value="1"/>
</dbReference>
<dbReference type="NCBIfam" id="NF008139">
    <property type="entry name" value="PRK10887.1"/>
    <property type="match status" value="1"/>
</dbReference>
<dbReference type="PANTHER" id="PTHR42946:SF1">
    <property type="entry name" value="PHOSPHOGLUCOMUTASE (ALPHA-D-GLUCOSE-1,6-BISPHOSPHATE-DEPENDENT)"/>
    <property type="match status" value="1"/>
</dbReference>
<dbReference type="PANTHER" id="PTHR42946">
    <property type="entry name" value="PHOSPHOHEXOSE MUTASE"/>
    <property type="match status" value="1"/>
</dbReference>
<dbReference type="Pfam" id="PF02878">
    <property type="entry name" value="PGM_PMM_I"/>
    <property type="match status" value="1"/>
</dbReference>
<dbReference type="Pfam" id="PF02879">
    <property type="entry name" value="PGM_PMM_II"/>
    <property type="match status" value="1"/>
</dbReference>
<dbReference type="Pfam" id="PF02880">
    <property type="entry name" value="PGM_PMM_III"/>
    <property type="match status" value="1"/>
</dbReference>
<dbReference type="Pfam" id="PF00408">
    <property type="entry name" value="PGM_PMM_IV"/>
    <property type="match status" value="1"/>
</dbReference>
<dbReference type="PRINTS" id="PR00509">
    <property type="entry name" value="PGMPMM"/>
</dbReference>
<dbReference type="SUPFAM" id="SSF55957">
    <property type="entry name" value="Phosphoglucomutase, C-terminal domain"/>
    <property type="match status" value="1"/>
</dbReference>
<dbReference type="SUPFAM" id="SSF53738">
    <property type="entry name" value="Phosphoglucomutase, first 3 domains"/>
    <property type="match status" value="3"/>
</dbReference>
<dbReference type="PROSITE" id="PS00710">
    <property type="entry name" value="PGM_PMM"/>
    <property type="match status" value="1"/>
</dbReference>
<name>GLMM_PELPD</name>
<accession>A1AR93</accession>
<sequence>MKKLFGTDGVRGVANVYPMTTEMAMQLGRAAAYIFKSSSKRRHRIVIGKDTRLSGYMLENAMVAGICSMGVDVLLVGPLPTPGIANITSSMRADAGVVISASHNPFQDNGIKFFSADGFKLPDQIELKIEKLIESNKIDSLRPTASEVGKAFRIDDAAGRYIVFLKNTFPTEMDLSGMKIVLDCANGAAYRVAPAVFEELGAEVICLGVSPNGTNINADCGSLYPQVISEAVKKHRADIGIALDGDADRVIVCDEFGHEVDGDHIMAICATDMLRRKLLKKKTLVTTVMSNMGLDIAMRAAGGKIVKTAVGDRYVVEEMRKGGYNLGGEQSGHMIFLDSNTTGDGILSALQLLAVMRRTEKPLSELSEVMIALPQVLVNTRVREKKDITTIPEIAARIRDVEEKLGNEGRVLIRYSGTEPLLRVMLEGKDTYEITAWANEIIDLVRKHLGEKQ</sequence>